<comment type="function">
    <text evidence="2">Catalyzes the formation of N(7)-methylguanine at position 46 (m7G46) in tRNA.</text>
</comment>
<comment type="catalytic activity">
    <reaction evidence="2">
        <text>guanosine(46) in tRNA + S-adenosyl-L-methionine = N(7)-methylguanosine(46) in tRNA + S-adenosyl-L-homocysteine</text>
        <dbReference type="Rhea" id="RHEA:42708"/>
        <dbReference type="Rhea" id="RHEA-COMP:10188"/>
        <dbReference type="Rhea" id="RHEA-COMP:10189"/>
        <dbReference type="ChEBI" id="CHEBI:57856"/>
        <dbReference type="ChEBI" id="CHEBI:59789"/>
        <dbReference type="ChEBI" id="CHEBI:74269"/>
        <dbReference type="ChEBI" id="CHEBI:74480"/>
        <dbReference type="EC" id="2.1.1.33"/>
    </reaction>
</comment>
<comment type="pathway">
    <text evidence="2">tRNA modification; N(7)-methylguanine-tRNA biosynthesis.</text>
</comment>
<comment type="similarity">
    <text evidence="2">Belongs to the class I-like SAM-binding methyltransferase superfamily. TrmB family.</text>
</comment>
<reference key="1">
    <citation type="journal article" date="2004" name="Nat. Biotechnol.">
        <title>Complete sequence and comparative genome analysis of the dairy bacterium Streptococcus thermophilus.</title>
        <authorList>
            <person name="Bolotin A."/>
            <person name="Quinquis B."/>
            <person name="Renault P."/>
            <person name="Sorokin A."/>
            <person name="Ehrlich S.D."/>
            <person name="Kulakauskas S."/>
            <person name="Lapidus A."/>
            <person name="Goltsman E."/>
            <person name="Mazur M."/>
            <person name="Pusch G.D."/>
            <person name="Fonstein M."/>
            <person name="Overbeek R."/>
            <person name="Kyprides N."/>
            <person name="Purnelle B."/>
            <person name="Prozzi D."/>
            <person name="Ngui K."/>
            <person name="Masuy D."/>
            <person name="Hancy F."/>
            <person name="Burteau S."/>
            <person name="Boutry M."/>
            <person name="Delcour J."/>
            <person name="Goffeau A."/>
            <person name="Hols P."/>
        </authorList>
    </citation>
    <scope>NUCLEOTIDE SEQUENCE [LARGE SCALE GENOMIC DNA]</scope>
    <source>
        <strain>CNRZ 1066</strain>
    </source>
</reference>
<name>TRMB_STRT1</name>
<feature type="chain" id="PRO_0000229203" description="tRNA (guanine-N(7)-)-methyltransferase">
    <location>
        <begin position="1"/>
        <end position="213"/>
    </location>
</feature>
<feature type="region of interest" description="Interaction with RNA" evidence="2">
    <location>
        <begin position="124"/>
        <end position="129"/>
    </location>
</feature>
<feature type="active site" evidence="1">
    <location>
        <position position="118"/>
    </location>
</feature>
<feature type="binding site" evidence="2">
    <location>
        <position position="44"/>
    </location>
    <ligand>
        <name>S-adenosyl-L-methionine</name>
        <dbReference type="ChEBI" id="CHEBI:59789"/>
    </ligand>
</feature>
<feature type="binding site" evidence="2">
    <location>
        <position position="69"/>
    </location>
    <ligand>
        <name>S-adenosyl-L-methionine</name>
        <dbReference type="ChEBI" id="CHEBI:59789"/>
    </ligand>
</feature>
<feature type="binding site" evidence="2">
    <location>
        <position position="96"/>
    </location>
    <ligand>
        <name>S-adenosyl-L-methionine</name>
        <dbReference type="ChEBI" id="CHEBI:59789"/>
    </ligand>
</feature>
<feature type="binding site" evidence="2">
    <location>
        <position position="118"/>
    </location>
    <ligand>
        <name>S-adenosyl-L-methionine</name>
        <dbReference type="ChEBI" id="CHEBI:59789"/>
    </ligand>
</feature>
<feature type="binding site" evidence="2">
    <location>
        <position position="122"/>
    </location>
    <ligand>
        <name>substrate</name>
    </ligand>
</feature>
<feature type="binding site" evidence="2">
    <location>
        <position position="154"/>
    </location>
    <ligand>
        <name>substrate</name>
    </ligand>
</feature>
<feature type="binding site" evidence="2">
    <location>
        <begin position="191"/>
        <end position="194"/>
    </location>
    <ligand>
        <name>substrate</name>
    </ligand>
</feature>
<protein>
    <recommendedName>
        <fullName evidence="2">tRNA (guanine-N(7)-)-methyltransferase</fullName>
        <ecNumber evidence="2">2.1.1.33</ecNumber>
    </recommendedName>
    <alternativeName>
        <fullName evidence="2">tRNA (guanine(46)-N(7))-methyltransferase</fullName>
    </alternativeName>
    <alternativeName>
        <fullName evidence="2">tRNA(m7G46)-methyltransferase</fullName>
    </alternativeName>
</protein>
<gene>
    <name evidence="2" type="primary">trmB</name>
    <name type="ordered locus">str1606</name>
</gene>
<organism>
    <name type="scientific">Streptococcus thermophilus (strain CNRZ 1066)</name>
    <dbReference type="NCBI Taxonomy" id="299768"/>
    <lineage>
        <taxon>Bacteria</taxon>
        <taxon>Bacillati</taxon>
        <taxon>Bacillota</taxon>
        <taxon>Bacilli</taxon>
        <taxon>Lactobacillales</taxon>
        <taxon>Streptococcaceae</taxon>
        <taxon>Streptococcus</taxon>
    </lineage>
</organism>
<evidence type="ECO:0000250" key="1"/>
<evidence type="ECO:0000255" key="2">
    <source>
        <dbReference type="HAMAP-Rule" id="MF_01057"/>
    </source>
</evidence>
<sequence>MRVRKRKGAEEHLANHPQYVILEPEAAKGKWHQIFGNDNPIHIEVGSGKGAFITGMAQQNPDINYIGIDIQLSVLSYALDKVLASGVENVKLLRVDGSALTNYFEDGEVDMMYLNFSDPWPKSRHEKRRLTYKTFLDTYKQILPKNGEIHLKTDNRGFFEYSLTSFSQYGMILNKVWLDLHASDYEGNVMTEYERKFSEKGQAIYRVEAQFKD</sequence>
<accession>Q5LYG9</accession>
<proteinExistence type="inferred from homology"/>
<keyword id="KW-0489">Methyltransferase</keyword>
<keyword id="KW-0949">S-adenosyl-L-methionine</keyword>
<keyword id="KW-0808">Transferase</keyword>
<keyword id="KW-0819">tRNA processing</keyword>
<dbReference type="EC" id="2.1.1.33" evidence="2"/>
<dbReference type="EMBL" id="CP000024">
    <property type="protein sequence ID" value="AAV63136.1"/>
    <property type="molecule type" value="Genomic_DNA"/>
</dbReference>
<dbReference type="RefSeq" id="WP_002947526.1">
    <property type="nucleotide sequence ID" value="NC_006449.1"/>
</dbReference>
<dbReference type="SMR" id="Q5LYG9"/>
<dbReference type="GeneID" id="66899353"/>
<dbReference type="KEGG" id="stc:str1606"/>
<dbReference type="HOGENOM" id="CLU_050910_2_1_9"/>
<dbReference type="UniPathway" id="UPA00989"/>
<dbReference type="GO" id="GO:0043527">
    <property type="term" value="C:tRNA methyltransferase complex"/>
    <property type="evidence" value="ECO:0007669"/>
    <property type="project" value="TreeGrafter"/>
</dbReference>
<dbReference type="GO" id="GO:0008176">
    <property type="term" value="F:tRNA (guanine(46)-N7)-methyltransferase activity"/>
    <property type="evidence" value="ECO:0007669"/>
    <property type="project" value="UniProtKB-UniRule"/>
</dbReference>
<dbReference type="CDD" id="cd02440">
    <property type="entry name" value="AdoMet_MTases"/>
    <property type="match status" value="1"/>
</dbReference>
<dbReference type="FunFam" id="3.40.50.150:FF:000035">
    <property type="entry name" value="tRNA (guanine-N(7)-)-methyltransferase"/>
    <property type="match status" value="1"/>
</dbReference>
<dbReference type="Gene3D" id="3.40.50.150">
    <property type="entry name" value="Vaccinia Virus protein VP39"/>
    <property type="match status" value="1"/>
</dbReference>
<dbReference type="HAMAP" id="MF_01057">
    <property type="entry name" value="tRNA_methyltr_TrmB"/>
    <property type="match status" value="1"/>
</dbReference>
<dbReference type="InterPro" id="IPR029063">
    <property type="entry name" value="SAM-dependent_MTases_sf"/>
</dbReference>
<dbReference type="InterPro" id="IPR003358">
    <property type="entry name" value="tRNA_(Gua-N-7)_MeTrfase_Trmb"/>
</dbReference>
<dbReference type="InterPro" id="IPR055361">
    <property type="entry name" value="tRNA_methyltr_TrmB_bact"/>
</dbReference>
<dbReference type="NCBIfam" id="NF001080">
    <property type="entry name" value="PRK00121.2-2"/>
    <property type="match status" value="1"/>
</dbReference>
<dbReference type="NCBIfam" id="TIGR00091">
    <property type="entry name" value="tRNA (guanosine(46)-N7)-methyltransferase TrmB"/>
    <property type="match status" value="1"/>
</dbReference>
<dbReference type="PANTHER" id="PTHR23417">
    <property type="entry name" value="3-DEOXY-D-MANNO-OCTULOSONIC-ACID TRANSFERASE/TRNA GUANINE-N 7 - -METHYLTRANSFERASE"/>
    <property type="match status" value="1"/>
</dbReference>
<dbReference type="PANTHER" id="PTHR23417:SF14">
    <property type="entry name" value="PENTACOTRIPEPTIDE-REPEAT REGION OF PRORP DOMAIN-CONTAINING PROTEIN"/>
    <property type="match status" value="1"/>
</dbReference>
<dbReference type="Pfam" id="PF02390">
    <property type="entry name" value="Methyltransf_4"/>
    <property type="match status" value="1"/>
</dbReference>
<dbReference type="SUPFAM" id="SSF53335">
    <property type="entry name" value="S-adenosyl-L-methionine-dependent methyltransferases"/>
    <property type="match status" value="1"/>
</dbReference>
<dbReference type="PROSITE" id="PS51625">
    <property type="entry name" value="SAM_MT_TRMB"/>
    <property type="match status" value="1"/>
</dbReference>